<proteinExistence type="inferred from homology"/>
<evidence type="ECO:0000255" key="1">
    <source>
        <dbReference type="HAMAP-Rule" id="MF_00417"/>
    </source>
</evidence>
<keyword id="KW-0963">Cytoplasm</keyword>
<keyword id="KW-0378">Hydrolase</keyword>
<keyword id="KW-0645">Protease</keyword>
<keyword id="KW-1185">Reference proteome</keyword>
<keyword id="KW-0788">Thiol protease</keyword>
<accession>Q8ENE4</accession>
<feature type="chain" id="PRO_0000184725" description="Pyrrolidone-carboxylate peptidase">
    <location>
        <begin position="1"/>
        <end position="199"/>
    </location>
</feature>
<feature type="active site" evidence="1">
    <location>
        <position position="80"/>
    </location>
</feature>
<feature type="active site" evidence="1">
    <location>
        <position position="142"/>
    </location>
</feature>
<feature type="active site" evidence="1">
    <location>
        <position position="166"/>
    </location>
</feature>
<comment type="function">
    <text evidence="1">Removes 5-oxoproline from various penultimate amino acid residues except L-proline.</text>
</comment>
<comment type="catalytic activity">
    <reaction evidence="1">
        <text>Release of an N-terminal pyroglutamyl group from a polypeptide, the second amino acid generally not being Pro.</text>
        <dbReference type="EC" id="3.4.19.3"/>
    </reaction>
</comment>
<comment type="subunit">
    <text evidence="1">Homotetramer.</text>
</comment>
<comment type="subcellular location">
    <subcellularLocation>
        <location evidence="1">Cytoplasm</location>
    </subcellularLocation>
</comment>
<comment type="similarity">
    <text evidence="1">Belongs to the peptidase C15 family.</text>
</comment>
<reference key="1">
    <citation type="journal article" date="2002" name="Nucleic Acids Res.">
        <title>Genome sequence of Oceanobacillus iheyensis isolated from the Iheya Ridge and its unexpected adaptive capabilities to extreme environments.</title>
        <authorList>
            <person name="Takami H."/>
            <person name="Takaki Y."/>
            <person name="Uchiyama I."/>
        </authorList>
    </citation>
    <scope>NUCLEOTIDE SEQUENCE [LARGE SCALE GENOMIC DNA]</scope>
    <source>
        <strain>DSM 14371 / CIP 107618 / JCM 11309 / KCTC 3954 / HTE831</strain>
    </source>
</reference>
<name>PCP_OCEIH</name>
<sequence length="199" mass="21882">MKKILLTGFVPFLDNPINPTEEIVQGLHKKSVNGWEVVGEVLPVDFHVTGDHLVELIHKVQPSAIISLGLAAGRNRITPERIAINCNDGPVDNQGYKPDGEKIISDGPDGYFSSLPIKKMVKELENNGIPAKISNTAGAYLCNHVMYRALHEIEQQKLDIFSGFIHIPASHKLALTNNIPSFAQKDLQRAIEICIGCLD</sequence>
<gene>
    <name evidence="1" type="primary">pcp</name>
    <name type="ordered locus">OB2539</name>
</gene>
<organism>
    <name type="scientific">Oceanobacillus iheyensis (strain DSM 14371 / CIP 107618 / JCM 11309 / KCTC 3954 / HTE831)</name>
    <dbReference type="NCBI Taxonomy" id="221109"/>
    <lineage>
        <taxon>Bacteria</taxon>
        <taxon>Bacillati</taxon>
        <taxon>Bacillota</taxon>
        <taxon>Bacilli</taxon>
        <taxon>Bacillales</taxon>
        <taxon>Bacillaceae</taxon>
        <taxon>Oceanobacillus</taxon>
    </lineage>
</organism>
<protein>
    <recommendedName>
        <fullName evidence="1">Pyrrolidone-carboxylate peptidase</fullName>
        <ecNumber evidence="1">3.4.19.3</ecNumber>
    </recommendedName>
    <alternativeName>
        <fullName evidence="1">5-oxoprolyl-peptidase</fullName>
    </alternativeName>
    <alternativeName>
        <fullName evidence="1">Pyroglutamyl-peptidase I</fullName>
        <shortName evidence="1">PGP-I</shortName>
        <shortName evidence="1">Pyrase</shortName>
    </alternativeName>
</protein>
<dbReference type="EC" id="3.4.19.3" evidence="1"/>
<dbReference type="EMBL" id="BA000028">
    <property type="protein sequence ID" value="BAC14495.1"/>
    <property type="molecule type" value="Genomic_DNA"/>
</dbReference>
<dbReference type="RefSeq" id="WP_011066932.1">
    <property type="nucleotide sequence ID" value="NC_004193.1"/>
</dbReference>
<dbReference type="SMR" id="Q8ENE4"/>
<dbReference type="STRING" id="221109.gene:10734791"/>
<dbReference type="MEROPS" id="C15.001"/>
<dbReference type="KEGG" id="oih:OB2539"/>
<dbReference type="eggNOG" id="COG2039">
    <property type="taxonomic scope" value="Bacteria"/>
</dbReference>
<dbReference type="HOGENOM" id="CLU_043960_4_3_9"/>
<dbReference type="OrthoDB" id="9779738at2"/>
<dbReference type="PhylomeDB" id="Q8ENE4"/>
<dbReference type="Proteomes" id="UP000000822">
    <property type="component" value="Chromosome"/>
</dbReference>
<dbReference type="GO" id="GO:0005829">
    <property type="term" value="C:cytosol"/>
    <property type="evidence" value="ECO:0007669"/>
    <property type="project" value="InterPro"/>
</dbReference>
<dbReference type="GO" id="GO:0016920">
    <property type="term" value="F:pyroglutamyl-peptidase activity"/>
    <property type="evidence" value="ECO:0007669"/>
    <property type="project" value="UniProtKB-UniRule"/>
</dbReference>
<dbReference type="GO" id="GO:0006508">
    <property type="term" value="P:proteolysis"/>
    <property type="evidence" value="ECO:0007669"/>
    <property type="project" value="UniProtKB-KW"/>
</dbReference>
<dbReference type="CDD" id="cd00501">
    <property type="entry name" value="Peptidase_C15"/>
    <property type="match status" value="1"/>
</dbReference>
<dbReference type="Gene3D" id="3.40.630.20">
    <property type="entry name" value="Peptidase C15, pyroglutamyl peptidase I-like"/>
    <property type="match status" value="1"/>
</dbReference>
<dbReference type="HAMAP" id="MF_00417">
    <property type="entry name" value="Pyrrolid_peptidase"/>
    <property type="match status" value="1"/>
</dbReference>
<dbReference type="InterPro" id="IPR000816">
    <property type="entry name" value="Peptidase_C15"/>
</dbReference>
<dbReference type="InterPro" id="IPR016125">
    <property type="entry name" value="Peptidase_C15-like"/>
</dbReference>
<dbReference type="InterPro" id="IPR036440">
    <property type="entry name" value="Peptidase_C15-like_sf"/>
</dbReference>
<dbReference type="InterPro" id="IPR029762">
    <property type="entry name" value="PGP-I_bact-type"/>
</dbReference>
<dbReference type="InterPro" id="IPR033694">
    <property type="entry name" value="PGPEP1_Cys_AS"/>
</dbReference>
<dbReference type="InterPro" id="IPR033693">
    <property type="entry name" value="PGPEP1_Glu_AS"/>
</dbReference>
<dbReference type="NCBIfam" id="NF009676">
    <property type="entry name" value="PRK13197.1"/>
    <property type="match status" value="1"/>
</dbReference>
<dbReference type="PANTHER" id="PTHR23402">
    <property type="entry name" value="PROTEASE FAMILY C15 PYROGLUTAMYL-PEPTIDASE I-RELATED"/>
    <property type="match status" value="1"/>
</dbReference>
<dbReference type="PANTHER" id="PTHR23402:SF1">
    <property type="entry name" value="PYROGLUTAMYL-PEPTIDASE I"/>
    <property type="match status" value="1"/>
</dbReference>
<dbReference type="Pfam" id="PF01470">
    <property type="entry name" value="Peptidase_C15"/>
    <property type="match status" value="1"/>
</dbReference>
<dbReference type="PIRSF" id="PIRSF015592">
    <property type="entry name" value="Prld-crbxl_pptds"/>
    <property type="match status" value="1"/>
</dbReference>
<dbReference type="PRINTS" id="PR00706">
    <property type="entry name" value="PYROGLUPTASE"/>
</dbReference>
<dbReference type="SUPFAM" id="SSF53182">
    <property type="entry name" value="Pyrrolidone carboxyl peptidase (pyroglutamate aminopeptidase)"/>
    <property type="match status" value="1"/>
</dbReference>
<dbReference type="PROSITE" id="PS01334">
    <property type="entry name" value="PYRASE_CYS"/>
    <property type="match status" value="1"/>
</dbReference>
<dbReference type="PROSITE" id="PS01333">
    <property type="entry name" value="PYRASE_GLU"/>
    <property type="match status" value="1"/>
</dbReference>